<gene>
    <name evidence="1" type="primary">kdpB2</name>
    <name type="ordered locus">SA1880</name>
</gene>
<reference key="1">
    <citation type="journal article" date="2001" name="Lancet">
        <title>Whole genome sequencing of meticillin-resistant Staphylococcus aureus.</title>
        <authorList>
            <person name="Kuroda M."/>
            <person name="Ohta T."/>
            <person name="Uchiyama I."/>
            <person name="Baba T."/>
            <person name="Yuzawa H."/>
            <person name="Kobayashi I."/>
            <person name="Cui L."/>
            <person name="Oguchi A."/>
            <person name="Aoki K."/>
            <person name="Nagai Y."/>
            <person name="Lian J.-Q."/>
            <person name="Ito T."/>
            <person name="Kanamori M."/>
            <person name="Matsumaru H."/>
            <person name="Maruyama A."/>
            <person name="Murakami H."/>
            <person name="Hosoyama A."/>
            <person name="Mizutani-Ui Y."/>
            <person name="Takahashi N.K."/>
            <person name="Sawano T."/>
            <person name="Inoue R."/>
            <person name="Kaito C."/>
            <person name="Sekimizu K."/>
            <person name="Hirakawa H."/>
            <person name="Kuhara S."/>
            <person name="Goto S."/>
            <person name="Yabuzaki J."/>
            <person name="Kanehisa M."/>
            <person name="Yamashita A."/>
            <person name="Oshima K."/>
            <person name="Furuya K."/>
            <person name="Yoshino C."/>
            <person name="Shiba T."/>
            <person name="Hattori M."/>
            <person name="Ogasawara N."/>
            <person name="Hayashi H."/>
            <person name="Hiramatsu K."/>
        </authorList>
    </citation>
    <scope>NUCLEOTIDE SEQUENCE [LARGE SCALE GENOMIC DNA]</scope>
    <source>
        <strain>N315</strain>
    </source>
</reference>
<organism>
    <name type="scientific">Staphylococcus aureus (strain N315)</name>
    <dbReference type="NCBI Taxonomy" id="158879"/>
    <lineage>
        <taxon>Bacteria</taxon>
        <taxon>Bacillati</taxon>
        <taxon>Bacillota</taxon>
        <taxon>Bacilli</taxon>
        <taxon>Bacillales</taxon>
        <taxon>Staphylococcaceae</taxon>
        <taxon>Staphylococcus</taxon>
    </lineage>
</organism>
<accession>P63684</accession>
<accession>Q99SI0</accession>
<dbReference type="EC" id="7.2.2.6" evidence="1"/>
<dbReference type="EMBL" id="BA000018">
    <property type="protein sequence ID" value="BAB43163.1"/>
    <property type="molecule type" value="Genomic_DNA"/>
</dbReference>
<dbReference type="PIR" id="B90000">
    <property type="entry name" value="B90000"/>
</dbReference>
<dbReference type="SMR" id="P63684"/>
<dbReference type="EnsemblBacteria" id="BAB43163">
    <property type="protein sequence ID" value="BAB43163"/>
    <property type="gene ID" value="BAB43163"/>
</dbReference>
<dbReference type="KEGG" id="sau:SA1880"/>
<dbReference type="HOGENOM" id="CLU_025728_2_0_9"/>
<dbReference type="GO" id="GO:0005886">
    <property type="term" value="C:plasma membrane"/>
    <property type="evidence" value="ECO:0007669"/>
    <property type="project" value="UniProtKB-SubCell"/>
</dbReference>
<dbReference type="GO" id="GO:0005524">
    <property type="term" value="F:ATP binding"/>
    <property type="evidence" value="ECO:0007669"/>
    <property type="project" value="UniProtKB-UniRule"/>
</dbReference>
<dbReference type="GO" id="GO:0016887">
    <property type="term" value="F:ATP hydrolysis activity"/>
    <property type="evidence" value="ECO:0007669"/>
    <property type="project" value="InterPro"/>
</dbReference>
<dbReference type="GO" id="GO:0000287">
    <property type="term" value="F:magnesium ion binding"/>
    <property type="evidence" value="ECO:0007669"/>
    <property type="project" value="UniProtKB-UniRule"/>
</dbReference>
<dbReference type="GO" id="GO:0008556">
    <property type="term" value="F:P-type potassium transmembrane transporter activity"/>
    <property type="evidence" value="ECO:0007669"/>
    <property type="project" value="UniProtKB-UniRule"/>
</dbReference>
<dbReference type="FunFam" id="2.70.150.10:FF:000010">
    <property type="entry name" value="Potassium-transporting ATPase ATP-binding subunit"/>
    <property type="match status" value="1"/>
</dbReference>
<dbReference type="FunFam" id="3.40.1110.10:FF:000007">
    <property type="entry name" value="Potassium-transporting ATPase ATP-binding subunit"/>
    <property type="match status" value="1"/>
</dbReference>
<dbReference type="Gene3D" id="3.40.1110.10">
    <property type="entry name" value="Calcium-transporting ATPase, cytoplasmic domain N"/>
    <property type="match status" value="1"/>
</dbReference>
<dbReference type="Gene3D" id="2.70.150.10">
    <property type="entry name" value="Calcium-transporting ATPase, cytoplasmic transduction domain A"/>
    <property type="match status" value="1"/>
</dbReference>
<dbReference type="Gene3D" id="3.40.50.1000">
    <property type="entry name" value="HAD superfamily/HAD-like"/>
    <property type="match status" value="1"/>
</dbReference>
<dbReference type="HAMAP" id="MF_00285">
    <property type="entry name" value="KdpB"/>
    <property type="match status" value="1"/>
</dbReference>
<dbReference type="InterPro" id="IPR023299">
    <property type="entry name" value="ATPase_P-typ_cyto_dom_N"/>
</dbReference>
<dbReference type="InterPro" id="IPR018303">
    <property type="entry name" value="ATPase_P-typ_P_site"/>
</dbReference>
<dbReference type="InterPro" id="IPR023298">
    <property type="entry name" value="ATPase_P-typ_TM_dom_sf"/>
</dbReference>
<dbReference type="InterPro" id="IPR008250">
    <property type="entry name" value="ATPase_P-typ_transduc_dom_A_sf"/>
</dbReference>
<dbReference type="InterPro" id="IPR036412">
    <property type="entry name" value="HAD-like_sf"/>
</dbReference>
<dbReference type="InterPro" id="IPR023214">
    <property type="entry name" value="HAD_sf"/>
</dbReference>
<dbReference type="InterPro" id="IPR006391">
    <property type="entry name" value="P-type_ATPase_bsu_IA"/>
</dbReference>
<dbReference type="InterPro" id="IPR001757">
    <property type="entry name" value="P_typ_ATPase"/>
</dbReference>
<dbReference type="InterPro" id="IPR044492">
    <property type="entry name" value="P_typ_ATPase_HD_dom"/>
</dbReference>
<dbReference type="NCBIfam" id="TIGR01494">
    <property type="entry name" value="ATPase_P-type"/>
    <property type="match status" value="2"/>
</dbReference>
<dbReference type="NCBIfam" id="TIGR01497">
    <property type="entry name" value="kdpB"/>
    <property type="match status" value="1"/>
</dbReference>
<dbReference type="PANTHER" id="PTHR43743">
    <property type="entry name" value="POTASSIUM-TRANSPORTING ATPASE ATP-BINDING SUBUNIT"/>
    <property type="match status" value="1"/>
</dbReference>
<dbReference type="PANTHER" id="PTHR43743:SF1">
    <property type="entry name" value="POTASSIUM-TRANSPORTING ATPASE ATP-BINDING SUBUNIT"/>
    <property type="match status" value="1"/>
</dbReference>
<dbReference type="Pfam" id="PF00122">
    <property type="entry name" value="E1-E2_ATPase"/>
    <property type="match status" value="1"/>
</dbReference>
<dbReference type="Pfam" id="PF00702">
    <property type="entry name" value="Hydrolase"/>
    <property type="match status" value="1"/>
</dbReference>
<dbReference type="PRINTS" id="PR00119">
    <property type="entry name" value="CATATPASE"/>
</dbReference>
<dbReference type="SFLD" id="SFLDG00002">
    <property type="entry name" value="C1.7:_P-type_atpase_like"/>
    <property type="match status" value="1"/>
</dbReference>
<dbReference type="SFLD" id="SFLDF00027">
    <property type="entry name" value="p-type_atpase"/>
    <property type="match status" value="1"/>
</dbReference>
<dbReference type="SUPFAM" id="SSF81653">
    <property type="entry name" value="Calcium ATPase, transduction domain A"/>
    <property type="match status" value="1"/>
</dbReference>
<dbReference type="SUPFAM" id="SSF81665">
    <property type="entry name" value="Calcium ATPase, transmembrane domain M"/>
    <property type="match status" value="1"/>
</dbReference>
<dbReference type="SUPFAM" id="SSF56784">
    <property type="entry name" value="HAD-like"/>
    <property type="match status" value="1"/>
</dbReference>
<dbReference type="PROSITE" id="PS00154">
    <property type="entry name" value="ATPASE_E1_E2"/>
    <property type="match status" value="1"/>
</dbReference>
<proteinExistence type="inferred from homology"/>
<sequence length="675" mass="73123">MHHVNKYFNQTMVIEALKMSFYKLNPKQLIKNPIMFVVEVGMVLTLILICFPDIFGTSYLSRGYLITIFIILLITILFANFSEAFAEGRGKAQADSLRQAQSNLTARLIEENGAYRIVNATELKAGQNIRVENGETIPADGVVINGLATVDESAITGESAPVIKESGGDFDGVIGGTLVTSDWLEIRVESEAGTSFLDKMIALVEGAERNKTPNEIALFTLLTTLTIIFLVVIVTLYPIASYLHLILPIAMLIALTVCLIPTTIGGLLSAIGIAGMDRVTQFNVLAKSGRAVEVCGDVDVMILDKTGTITYGNRIASEFLPVNQQMLEKLIVAAYMSSIYDDTPEGKSIVRLAKQMYINELPKDIDGTYKPFTAETRMSGIITNEISVFKGAPNSMINLVKQQQGNIPLNIESLCMDVSSKGGTPLIVIENNVMLGVIYLKDVIKDGLVERFTELRKMGIETVMCTGDNALTAATIAKEAGVDRFVAECKPEDKIKVIKDEQAKGHIVAMTGDGTNDAPALAQANIGLAMNSGTISAKEAANLIDLDSNPTKLIEVVKIGKQLLMTRGALTTFSLANDVAKYFAILPALMMSTIPEMTSLNIMHLSSPKSAIISALIFNALIIVALIPIAMKGVKVKGYSIDRIFINNMLIYGLGGLIVPFLGIKLIDMIVQFFV</sequence>
<feature type="chain" id="PRO_0000046138" description="Potassium-transporting ATPase ATP-binding subunit 2">
    <location>
        <begin position="1"/>
        <end position="675"/>
    </location>
</feature>
<feature type="transmembrane region" description="Helical" evidence="1">
    <location>
        <begin position="34"/>
        <end position="54"/>
    </location>
</feature>
<feature type="transmembrane region" description="Helical" evidence="1">
    <location>
        <begin position="65"/>
        <end position="85"/>
    </location>
</feature>
<feature type="transmembrane region" description="Helical" evidence="1">
    <location>
        <begin position="216"/>
        <end position="236"/>
    </location>
</feature>
<feature type="transmembrane region" description="Helical" evidence="1">
    <location>
        <begin position="245"/>
        <end position="265"/>
    </location>
</feature>
<feature type="transmembrane region" description="Helical" evidence="1">
    <location>
        <begin position="569"/>
        <end position="591"/>
    </location>
</feature>
<feature type="transmembrane region" description="Helical" evidence="1">
    <location>
        <begin position="611"/>
        <end position="631"/>
    </location>
</feature>
<feature type="transmembrane region" description="Helical" evidence="1">
    <location>
        <begin position="644"/>
        <end position="664"/>
    </location>
</feature>
<feature type="active site" description="4-aspartylphosphate intermediate" evidence="1">
    <location>
        <position position="304"/>
    </location>
</feature>
<feature type="binding site" evidence="1">
    <location>
        <position position="341"/>
    </location>
    <ligand>
        <name>ATP</name>
        <dbReference type="ChEBI" id="CHEBI:30616"/>
    </ligand>
</feature>
<feature type="binding site" evidence="1">
    <location>
        <position position="345"/>
    </location>
    <ligand>
        <name>ATP</name>
        <dbReference type="ChEBI" id="CHEBI:30616"/>
    </ligand>
</feature>
<feature type="binding site" evidence="1">
    <location>
        <begin position="372"/>
        <end position="379"/>
    </location>
    <ligand>
        <name>ATP</name>
        <dbReference type="ChEBI" id="CHEBI:30616"/>
    </ligand>
</feature>
<feature type="binding site" evidence="1">
    <location>
        <position position="390"/>
    </location>
    <ligand>
        <name>ATP</name>
        <dbReference type="ChEBI" id="CHEBI:30616"/>
    </ligand>
</feature>
<feature type="binding site" evidence="1">
    <location>
        <position position="513"/>
    </location>
    <ligand>
        <name>Mg(2+)</name>
        <dbReference type="ChEBI" id="CHEBI:18420"/>
    </ligand>
</feature>
<feature type="binding site" evidence="1">
    <location>
        <position position="517"/>
    </location>
    <ligand>
        <name>Mg(2+)</name>
        <dbReference type="ChEBI" id="CHEBI:18420"/>
    </ligand>
</feature>
<name>KDPB2_STAAN</name>
<evidence type="ECO:0000255" key="1">
    <source>
        <dbReference type="HAMAP-Rule" id="MF_00285"/>
    </source>
</evidence>
<keyword id="KW-0067">ATP-binding</keyword>
<keyword id="KW-1003">Cell membrane</keyword>
<keyword id="KW-0406">Ion transport</keyword>
<keyword id="KW-0460">Magnesium</keyword>
<keyword id="KW-0472">Membrane</keyword>
<keyword id="KW-0479">Metal-binding</keyword>
<keyword id="KW-0547">Nucleotide-binding</keyword>
<keyword id="KW-0597">Phosphoprotein</keyword>
<keyword id="KW-0630">Potassium</keyword>
<keyword id="KW-0633">Potassium transport</keyword>
<keyword id="KW-1278">Translocase</keyword>
<keyword id="KW-0812">Transmembrane</keyword>
<keyword id="KW-1133">Transmembrane helix</keyword>
<keyword id="KW-0813">Transport</keyword>
<comment type="function">
    <text evidence="1">Part of the high-affinity ATP-driven potassium transport (or Kdp) system, which catalyzes the hydrolysis of ATP coupled with the electrogenic transport of potassium into the cytoplasm. This subunit is responsible for energy coupling to the transport system and for the release of the potassium ions to the cytoplasm.</text>
</comment>
<comment type="catalytic activity">
    <reaction evidence="1">
        <text>K(+)(out) + ATP + H2O = K(+)(in) + ADP + phosphate + H(+)</text>
        <dbReference type="Rhea" id="RHEA:16777"/>
        <dbReference type="ChEBI" id="CHEBI:15377"/>
        <dbReference type="ChEBI" id="CHEBI:15378"/>
        <dbReference type="ChEBI" id="CHEBI:29103"/>
        <dbReference type="ChEBI" id="CHEBI:30616"/>
        <dbReference type="ChEBI" id="CHEBI:43474"/>
        <dbReference type="ChEBI" id="CHEBI:456216"/>
        <dbReference type="EC" id="7.2.2.6"/>
    </reaction>
    <physiologicalReaction direction="left-to-right" evidence="1">
        <dbReference type="Rhea" id="RHEA:16778"/>
    </physiologicalReaction>
</comment>
<comment type="subunit">
    <text evidence="1">The system is composed of three essential subunits: KdpA, KdpB and KdpC.</text>
</comment>
<comment type="subcellular location">
    <subcellularLocation>
        <location evidence="1">Cell membrane</location>
        <topology evidence="1">Multi-pass membrane protein</topology>
    </subcellularLocation>
</comment>
<comment type="similarity">
    <text evidence="1">Belongs to the cation transport ATPase (P-type) (TC 3.A.3) family. Type IA subfamily.</text>
</comment>
<protein>
    <recommendedName>
        <fullName evidence="1">Potassium-transporting ATPase ATP-binding subunit 2</fullName>
        <ecNumber evidence="1">7.2.2.6</ecNumber>
    </recommendedName>
    <alternativeName>
        <fullName evidence="1">ATP phosphohydrolase [potassium-transporting] B chain 2</fullName>
    </alternativeName>
    <alternativeName>
        <fullName evidence="1">Potassium-binding and translocating subunit B 2</fullName>
    </alternativeName>
    <alternativeName>
        <fullName evidence="1">Potassium-translocating ATPase B chain 2</fullName>
    </alternativeName>
</protein>